<feature type="chain" id="PRO_1000096856" description="Phosphopantetheine adenylyltransferase">
    <location>
        <begin position="1"/>
        <end position="159"/>
    </location>
</feature>
<feature type="binding site" evidence="1">
    <location>
        <begin position="8"/>
        <end position="9"/>
    </location>
    <ligand>
        <name>ATP</name>
        <dbReference type="ChEBI" id="CHEBI:30616"/>
    </ligand>
</feature>
<feature type="binding site" evidence="1">
    <location>
        <position position="8"/>
    </location>
    <ligand>
        <name>substrate</name>
    </ligand>
</feature>
<feature type="binding site" evidence="1">
    <location>
        <position position="16"/>
    </location>
    <ligand>
        <name>ATP</name>
        <dbReference type="ChEBI" id="CHEBI:30616"/>
    </ligand>
</feature>
<feature type="binding site" evidence="1">
    <location>
        <position position="40"/>
    </location>
    <ligand>
        <name>substrate</name>
    </ligand>
</feature>
<feature type="binding site" evidence="1">
    <location>
        <position position="72"/>
    </location>
    <ligand>
        <name>substrate</name>
    </ligand>
</feature>
<feature type="binding site" evidence="1">
    <location>
        <position position="86"/>
    </location>
    <ligand>
        <name>substrate</name>
    </ligand>
</feature>
<feature type="binding site" evidence="1">
    <location>
        <begin position="87"/>
        <end position="89"/>
    </location>
    <ligand>
        <name>ATP</name>
        <dbReference type="ChEBI" id="CHEBI:30616"/>
    </ligand>
</feature>
<feature type="binding site" evidence="1">
    <location>
        <position position="97"/>
    </location>
    <ligand>
        <name>ATP</name>
        <dbReference type="ChEBI" id="CHEBI:30616"/>
    </ligand>
</feature>
<feature type="binding site" evidence="1">
    <location>
        <begin position="122"/>
        <end position="128"/>
    </location>
    <ligand>
        <name>ATP</name>
        <dbReference type="ChEBI" id="CHEBI:30616"/>
    </ligand>
</feature>
<feature type="site" description="Transition state stabilizer" evidence="1">
    <location>
        <position position="16"/>
    </location>
</feature>
<dbReference type="EC" id="2.7.7.3" evidence="1"/>
<dbReference type="EMBL" id="CP000805">
    <property type="protein sequence ID" value="ACD70710.1"/>
    <property type="molecule type" value="Genomic_DNA"/>
</dbReference>
<dbReference type="RefSeq" id="WP_010881732.1">
    <property type="nucleotide sequence ID" value="NC_021508.1"/>
</dbReference>
<dbReference type="SMR" id="B2S2N1"/>
<dbReference type="GeneID" id="93876074"/>
<dbReference type="KEGG" id="tpp:TPASS_0283"/>
<dbReference type="PATRIC" id="fig|455434.6.peg.288"/>
<dbReference type="UniPathway" id="UPA00241">
    <property type="reaction ID" value="UER00355"/>
</dbReference>
<dbReference type="Proteomes" id="UP000001202">
    <property type="component" value="Chromosome"/>
</dbReference>
<dbReference type="GO" id="GO:0005737">
    <property type="term" value="C:cytoplasm"/>
    <property type="evidence" value="ECO:0007669"/>
    <property type="project" value="UniProtKB-SubCell"/>
</dbReference>
<dbReference type="GO" id="GO:0005524">
    <property type="term" value="F:ATP binding"/>
    <property type="evidence" value="ECO:0007669"/>
    <property type="project" value="UniProtKB-KW"/>
</dbReference>
<dbReference type="GO" id="GO:0004595">
    <property type="term" value="F:pantetheine-phosphate adenylyltransferase activity"/>
    <property type="evidence" value="ECO:0007669"/>
    <property type="project" value="UniProtKB-UniRule"/>
</dbReference>
<dbReference type="GO" id="GO:0015937">
    <property type="term" value="P:coenzyme A biosynthetic process"/>
    <property type="evidence" value="ECO:0007669"/>
    <property type="project" value="UniProtKB-UniRule"/>
</dbReference>
<dbReference type="CDD" id="cd02163">
    <property type="entry name" value="PPAT"/>
    <property type="match status" value="1"/>
</dbReference>
<dbReference type="Gene3D" id="3.40.50.620">
    <property type="entry name" value="HUPs"/>
    <property type="match status" value="1"/>
</dbReference>
<dbReference type="HAMAP" id="MF_00151">
    <property type="entry name" value="PPAT_bact"/>
    <property type="match status" value="1"/>
</dbReference>
<dbReference type="InterPro" id="IPR004821">
    <property type="entry name" value="Cyt_trans-like"/>
</dbReference>
<dbReference type="InterPro" id="IPR001980">
    <property type="entry name" value="PPAT"/>
</dbReference>
<dbReference type="InterPro" id="IPR014729">
    <property type="entry name" value="Rossmann-like_a/b/a_fold"/>
</dbReference>
<dbReference type="NCBIfam" id="TIGR01510">
    <property type="entry name" value="coaD_prev_kdtB"/>
    <property type="match status" value="1"/>
</dbReference>
<dbReference type="NCBIfam" id="TIGR00125">
    <property type="entry name" value="cyt_tran_rel"/>
    <property type="match status" value="1"/>
</dbReference>
<dbReference type="PANTHER" id="PTHR21342">
    <property type="entry name" value="PHOSPHOPANTETHEINE ADENYLYLTRANSFERASE"/>
    <property type="match status" value="1"/>
</dbReference>
<dbReference type="PANTHER" id="PTHR21342:SF1">
    <property type="entry name" value="PHOSPHOPANTETHEINE ADENYLYLTRANSFERASE"/>
    <property type="match status" value="1"/>
</dbReference>
<dbReference type="Pfam" id="PF01467">
    <property type="entry name" value="CTP_transf_like"/>
    <property type="match status" value="1"/>
</dbReference>
<dbReference type="PRINTS" id="PR01020">
    <property type="entry name" value="LPSBIOSNTHSS"/>
</dbReference>
<dbReference type="SUPFAM" id="SSF52374">
    <property type="entry name" value="Nucleotidylyl transferase"/>
    <property type="match status" value="1"/>
</dbReference>
<sequence length="159" mass="17805">MKAIFAGSFDPPTFGHLDLVLRARSLFAEVHVLVAVNVQKRYLLSECERVDLMRQVLGDRPGVYVFPWRSLVVTYARDVGARVLVRGVRNATDFCQEFDLAWVHRALDAGLETVFLAAKPCYAALRSSMVREVASFGGDVSTFVPRVVARLLQEKFTQA</sequence>
<proteinExistence type="inferred from homology"/>
<protein>
    <recommendedName>
        <fullName evidence="1">Phosphopantetheine adenylyltransferase</fullName>
        <ecNumber evidence="1">2.7.7.3</ecNumber>
    </recommendedName>
    <alternativeName>
        <fullName evidence="1">Dephospho-CoA pyrophosphorylase</fullName>
    </alternativeName>
    <alternativeName>
        <fullName evidence="1">Pantetheine-phosphate adenylyltransferase</fullName>
        <shortName evidence="1">PPAT</shortName>
    </alternativeName>
</protein>
<organism>
    <name type="scientific">Treponema pallidum subsp. pallidum (strain SS14)</name>
    <dbReference type="NCBI Taxonomy" id="455434"/>
    <lineage>
        <taxon>Bacteria</taxon>
        <taxon>Pseudomonadati</taxon>
        <taxon>Spirochaetota</taxon>
        <taxon>Spirochaetia</taxon>
        <taxon>Spirochaetales</taxon>
        <taxon>Treponemataceae</taxon>
        <taxon>Treponema</taxon>
    </lineage>
</organism>
<accession>B2S2N1</accession>
<comment type="function">
    <text evidence="1">Reversibly transfers an adenylyl group from ATP to 4'-phosphopantetheine, yielding dephospho-CoA (dPCoA) and pyrophosphate.</text>
</comment>
<comment type="catalytic activity">
    <reaction evidence="1">
        <text>(R)-4'-phosphopantetheine + ATP + H(+) = 3'-dephospho-CoA + diphosphate</text>
        <dbReference type="Rhea" id="RHEA:19801"/>
        <dbReference type="ChEBI" id="CHEBI:15378"/>
        <dbReference type="ChEBI" id="CHEBI:30616"/>
        <dbReference type="ChEBI" id="CHEBI:33019"/>
        <dbReference type="ChEBI" id="CHEBI:57328"/>
        <dbReference type="ChEBI" id="CHEBI:61723"/>
        <dbReference type="EC" id="2.7.7.3"/>
    </reaction>
</comment>
<comment type="cofactor">
    <cofactor evidence="1">
        <name>Mg(2+)</name>
        <dbReference type="ChEBI" id="CHEBI:18420"/>
    </cofactor>
</comment>
<comment type="pathway">
    <text evidence="1">Cofactor biosynthesis; coenzyme A biosynthesis; CoA from (R)-pantothenate: step 4/5.</text>
</comment>
<comment type="subunit">
    <text evidence="1">Homohexamer.</text>
</comment>
<comment type="subcellular location">
    <subcellularLocation>
        <location evidence="1">Cytoplasm</location>
    </subcellularLocation>
</comment>
<comment type="similarity">
    <text evidence="1">Belongs to the bacterial CoaD family.</text>
</comment>
<name>COAD_TREPS</name>
<reference key="1">
    <citation type="journal article" date="2008" name="BMC Microbiol.">
        <title>Complete genome sequence of Treponema pallidum ssp. pallidum strain SS14 determined with oligonucleotide arrays.</title>
        <authorList>
            <person name="Matejkova P."/>
            <person name="Strouhal M."/>
            <person name="Smajs D."/>
            <person name="Norris S.J."/>
            <person name="Palzkill T."/>
            <person name="Petrosino J.F."/>
            <person name="Sodergren E."/>
            <person name="Norton J.E."/>
            <person name="Singh J."/>
            <person name="Richmond T.A."/>
            <person name="Molla M.N."/>
            <person name="Albert T.J."/>
            <person name="Weinstock G.M."/>
        </authorList>
    </citation>
    <scope>NUCLEOTIDE SEQUENCE [LARGE SCALE GENOMIC DNA]</scope>
    <source>
        <strain>SS14</strain>
    </source>
</reference>
<keyword id="KW-0067">ATP-binding</keyword>
<keyword id="KW-0173">Coenzyme A biosynthesis</keyword>
<keyword id="KW-0963">Cytoplasm</keyword>
<keyword id="KW-0460">Magnesium</keyword>
<keyword id="KW-0547">Nucleotide-binding</keyword>
<keyword id="KW-0548">Nucleotidyltransferase</keyword>
<keyword id="KW-0808">Transferase</keyword>
<gene>
    <name evidence="1" type="primary">coaD</name>
    <name type="ordered locus">TPASS_0283</name>
</gene>
<evidence type="ECO:0000255" key="1">
    <source>
        <dbReference type="HAMAP-Rule" id="MF_00151"/>
    </source>
</evidence>